<name>ADDA_MOOTA</name>
<gene>
    <name evidence="1" type="primary">addA</name>
    <name type="ordered locus">Moth_0482</name>
</gene>
<accession>Q2RL77</accession>
<evidence type="ECO:0000255" key="1">
    <source>
        <dbReference type="HAMAP-Rule" id="MF_01451"/>
    </source>
</evidence>
<evidence type="ECO:0000256" key="2">
    <source>
        <dbReference type="SAM" id="MobiDB-lite"/>
    </source>
</evidence>
<feature type="chain" id="PRO_0000379301" description="ATP-dependent helicase/nuclease subunit A">
    <location>
        <begin position="1"/>
        <end position="1405"/>
    </location>
</feature>
<feature type="domain" description="UvrD-like helicase ATP-binding" evidence="1">
    <location>
        <begin position="7"/>
        <end position="482"/>
    </location>
</feature>
<feature type="domain" description="UvrD-like helicase C-terminal" evidence="1">
    <location>
        <begin position="551"/>
        <end position="914"/>
    </location>
</feature>
<feature type="region of interest" description="Disordered" evidence="2">
    <location>
        <begin position="778"/>
        <end position="797"/>
    </location>
</feature>
<feature type="region of interest" description="Disordered" evidence="2">
    <location>
        <begin position="1132"/>
        <end position="1165"/>
    </location>
</feature>
<feature type="compositionally biased region" description="Low complexity" evidence="2">
    <location>
        <begin position="787"/>
        <end position="796"/>
    </location>
</feature>
<feature type="binding site" evidence="1">
    <location>
        <begin position="28"/>
        <end position="35"/>
    </location>
    <ligand>
        <name>ATP</name>
        <dbReference type="ChEBI" id="CHEBI:30616"/>
    </ligand>
</feature>
<organism>
    <name type="scientific">Moorella thermoacetica (strain ATCC 39073 / JCM 9320)</name>
    <dbReference type="NCBI Taxonomy" id="264732"/>
    <lineage>
        <taxon>Bacteria</taxon>
        <taxon>Bacillati</taxon>
        <taxon>Bacillota</taxon>
        <taxon>Clostridia</taxon>
        <taxon>Moorellales</taxon>
        <taxon>Moorellaceae</taxon>
        <taxon>Moorella</taxon>
    </lineage>
</organism>
<keyword id="KW-0067">ATP-binding</keyword>
<keyword id="KW-0227">DNA damage</keyword>
<keyword id="KW-0234">DNA repair</keyword>
<keyword id="KW-0238">DNA-binding</keyword>
<keyword id="KW-0269">Exonuclease</keyword>
<keyword id="KW-0347">Helicase</keyword>
<keyword id="KW-0378">Hydrolase</keyword>
<keyword id="KW-0413">Isomerase</keyword>
<keyword id="KW-0540">Nuclease</keyword>
<keyword id="KW-0547">Nucleotide-binding</keyword>
<dbReference type="EC" id="3.1.-.-" evidence="1"/>
<dbReference type="EC" id="5.6.2.4" evidence="1"/>
<dbReference type="EMBL" id="CP000232">
    <property type="protein sequence ID" value="ABC18812.1"/>
    <property type="molecule type" value="Genomic_DNA"/>
</dbReference>
<dbReference type="RefSeq" id="YP_429355.1">
    <property type="nucleotide sequence ID" value="NC_007644.1"/>
</dbReference>
<dbReference type="SMR" id="Q2RL77"/>
<dbReference type="STRING" id="264732.Moth_0482"/>
<dbReference type="EnsemblBacteria" id="ABC18812">
    <property type="protein sequence ID" value="ABC18812"/>
    <property type="gene ID" value="Moth_0482"/>
</dbReference>
<dbReference type="KEGG" id="mta:Moth_0482"/>
<dbReference type="PATRIC" id="fig|264732.11.peg.518"/>
<dbReference type="eggNOG" id="COG1074">
    <property type="taxonomic scope" value="Bacteria"/>
</dbReference>
<dbReference type="HOGENOM" id="CLU_001114_3_1_9"/>
<dbReference type="OrthoDB" id="9810135at2"/>
<dbReference type="GO" id="GO:0005829">
    <property type="term" value="C:cytosol"/>
    <property type="evidence" value="ECO:0007669"/>
    <property type="project" value="TreeGrafter"/>
</dbReference>
<dbReference type="GO" id="GO:0033202">
    <property type="term" value="C:DNA helicase complex"/>
    <property type="evidence" value="ECO:0007669"/>
    <property type="project" value="TreeGrafter"/>
</dbReference>
<dbReference type="GO" id="GO:0043138">
    <property type="term" value="F:3'-5' DNA helicase activity"/>
    <property type="evidence" value="ECO:0007669"/>
    <property type="project" value="UniProtKB-UniRule"/>
</dbReference>
<dbReference type="GO" id="GO:0008408">
    <property type="term" value="F:3'-5' exonuclease activity"/>
    <property type="evidence" value="ECO:0007669"/>
    <property type="project" value="UniProtKB-UniRule"/>
</dbReference>
<dbReference type="GO" id="GO:0005524">
    <property type="term" value="F:ATP binding"/>
    <property type="evidence" value="ECO:0007669"/>
    <property type="project" value="UniProtKB-UniRule"/>
</dbReference>
<dbReference type="GO" id="GO:0016887">
    <property type="term" value="F:ATP hydrolysis activity"/>
    <property type="evidence" value="ECO:0007669"/>
    <property type="project" value="RHEA"/>
</dbReference>
<dbReference type="GO" id="GO:0003690">
    <property type="term" value="F:double-stranded DNA binding"/>
    <property type="evidence" value="ECO:0007669"/>
    <property type="project" value="UniProtKB-UniRule"/>
</dbReference>
<dbReference type="GO" id="GO:0000724">
    <property type="term" value="P:double-strand break repair via homologous recombination"/>
    <property type="evidence" value="ECO:0007669"/>
    <property type="project" value="UniProtKB-UniRule"/>
</dbReference>
<dbReference type="CDD" id="cd17932">
    <property type="entry name" value="DEXQc_UvrD"/>
    <property type="match status" value="1"/>
</dbReference>
<dbReference type="FunFam" id="3.40.50.300:FF:001236">
    <property type="entry name" value="ATP-dependent helicase/nuclease subunit A"/>
    <property type="match status" value="1"/>
</dbReference>
<dbReference type="Gene3D" id="3.90.320.10">
    <property type="match status" value="1"/>
</dbReference>
<dbReference type="Gene3D" id="3.40.50.300">
    <property type="entry name" value="P-loop containing nucleotide triphosphate hydrolases"/>
    <property type="match status" value="4"/>
</dbReference>
<dbReference type="HAMAP" id="MF_01451">
    <property type="entry name" value="AddA"/>
    <property type="match status" value="1"/>
</dbReference>
<dbReference type="InterPro" id="IPR014152">
    <property type="entry name" value="AddA"/>
</dbReference>
<dbReference type="InterPro" id="IPR014017">
    <property type="entry name" value="DNA_helicase_UvrD-like_C"/>
</dbReference>
<dbReference type="InterPro" id="IPR000212">
    <property type="entry name" value="DNA_helicase_UvrD/REP"/>
</dbReference>
<dbReference type="InterPro" id="IPR027417">
    <property type="entry name" value="P-loop_NTPase"/>
</dbReference>
<dbReference type="InterPro" id="IPR011604">
    <property type="entry name" value="PDDEXK-like_dom_sf"/>
</dbReference>
<dbReference type="InterPro" id="IPR038726">
    <property type="entry name" value="PDDEXK_AddAB-type"/>
</dbReference>
<dbReference type="InterPro" id="IPR011335">
    <property type="entry name" value="Restrct_endonuc-II-like"/>
</dbReference>
<dbReference type="InterPro" id="IPR014016">
    <property type="entry name" value="UvrD-like_ATP-bd"/>
</dbReference>
<dbReference type="PANTHER" id="PTHR11070:SF48">
    <property type="entry name" value="ATP-DEPENDENT HELICASE_NUCLEASE SUBUNIT A"/>
    <property type="match status" value="1"/>
</dbReference>
<dbReference type="PANTHER" id="PTHR11070">
    <property type="entry name" value="UVRD / RECB / PCRA DNA HELICASE FAMILY MEMBER"/>
    <property type="match status" value="1"/>
</dbReference>
<dbReference type="Pfam" id="PF12705">
    <property type="entry name" value="PDDEXK_1"/>
    <property type="match status" value="1"/>
</dbReference>
<dbReference type="Pfam" id="PF00580">
    <property type="entry name" value="UvrD-helicase"/>
    <property type="match status" value="1"/>
</dbReference>
<dbReference type="Pfam" id="PF13361">
    <property type="entry name" value="UvrD_C"/>
    <property type="match status" value="1"/>
</dbReference>
<dbReference type="SUPFAM" id="SSF52540">
    <property type="entry name" value="P-loop containing nucleoside triphosphate hydrolases"/>
    <property type="match status" value="1"/>
</dbReference>
<dbReference type="SUPFAM" id="SSF52980">
    <property type="entry name" value="Restriction endonuclease-like"/>
    <property type="match status" value="1"/>
</dbReference>
<dbReference type="PROSITE" id="PS51198">
    <property type="entry name" value="UVRD_HELICASE_ATP_BIND"/>
    <property type="match status" value="1"/>
</dbReference>
<dbReference type="PROSITE" id="PS51217">
    <property type="entry name" value="UVRD_HELICASE_CTER"/>
    <property type="match status" value="1"/>
</dbReference>
<sequence>MTATGKREWTPDQLAAIRARRANILVAAAAGAGKTAVLVERIIQRLTDPEDPVSLENLLVVTFTEAAAAEMRQRIGAALEAAVARDPENEALRRQLLLLNRAHISTIHSFCLWVLRTYFYRLDLDPGFRVMDPAEVDLMQLEVMDRVLEEAFAAEPDGGPVTDLADSLGGRGDANLVDLVLRVWEFSRSLPWPEAWLEQVTSSYKVTPETPLESLPWYGELRQMITLELQEAAWYLEQARQAAAAPGGPAVYLDNLENEKEQVTRLLEEVGDLPWEELNAKLAAVHFGRLKAARGEDVDPVLKERAGKLRNQARDLLYALKEDLCRDEAAVRAELERSGELVATLVGLVRRFDAALREAKGRRNLIDFSDLEHLCLRVLLDEGAGPGRLQPSDVALELRQRFAEVLVDEYQDINTVQDAILALVSRQDVAENNLFMVGDVKQSIYRFRLANPDLFLAKYRQYPEGEGGPNRRILLKANFRSRQGVVDGVNFIFRQVFSPLVGELEYDAAAALVGRAGYPENPAAATPAVEVYLQEGKVAAGTGAGGRTDLPEAVGAGKGGKISGGAGYGETLSGYGAASPGGETGAPDLEDLTALEREALLVARRIRRMVRGTPERPGPEFQVWDQEKKEYRDLTYRDIVILLRATRDRAPVFLEALKQYGIPAYADLGSGYFAATEIETILSLLRVIDNPHQDIPLAAVLRSPIVGLSAGDLARIRLAAPGEDFFTAVVKAAGAPLLPFTARESAAPSSTATGSGGALDNQPGQDPVCIAPYIEDTQEPWRDDHPGPGAAAGKAVPGKDRDLASLLREFLARLERWRTLARRQPLGDVIWQLYRETGYLEFVGGLPGGAQRQANLRALLDRARQFEGFARHGLFRFLRFIERLQQNEGDLGTARALGENEDVVRVMSIHRAKGLEFPVVIVAGLGKGFNLRDLSGDFLLHGRLGLVPLYLDAAAGIKYPTLPYLATGHRLRLEALSEELRILYVALTRAREKLILAGTVRDLPRQAENWCASLFLPGEQLPPVLTSRAGNPLDWLLPALARHPDAAAIRDLAGVGGGHLLPDPSSWQVEVVRGGELPDRGSEEPGVQVRVTAGYQGTESAGQQENPGLLCSGWPGGSRELAGAVTPVQETAGKTVAPPGSNIAEAGVEPGVSPPAGAVSPQDETGPTWLQQEVARRLAWTYPRQPLTALPVKLTVTDLKRRFDVFNEGETPLRPGENTFTRRPAFLQSHQGLTAAERGTATHLVLQHVDLSRPVTGESLAGLLQEMVEREILTPEQAAAVDIRAIVTFFAAPLGKRLLARWEQVKRELPFSLAVPAVELYPGLPAEAAAGEIILVQGIIDCLVEEEDGFLLLDFKTGRIPPDPLAAYREQVRFYTRAVETIFNRNVKEVHLYFLDGGVDFKVTS</sequence>
<reference key="1">
    <citation type="journal article" date="2008" name="Environ. Microbiol.">
        <title>The complete genome sequence of Moorella thermoacetica (f. Clostridium thermoaceticum).</title>
        <authorList>
            <person name="Pierce E."/>
            <person name="Xie G."/>
            <person name="Barabote R.D."/>
            <person name="Saunders E."/>
            <person name="Han C.S."/>
            <person name="Detter J.C."/>
            <person name="Richardson P."/>
            <person name="Brettin T.S."/>
            <person name="Das A."/>
            <person name="Ljungdahl L.G."/>
            <person name="Ragsdale S.W."/>
        </authorList>
    </citation>
    <scope>NUCLEOTIDE SEQUENCE [LARGE SCALE GENOMIC DNA]</scope>
    <source>
        <strain>ATCC 39073 / JCM 9320</strain>
    </source>
</reference>
<comment type="function">
    <text evidence="1">The heterodimer acts as both an ATP-dependent DNA helicase and an ATP-dependent, dual-direction single-stranded exonuclease. Recognizes the chi site generating a DNA molecule suitable for the initiation of homologous recombination. The AddA nuclease domain is required for chi fragment generation; this subunit has the helicase and 3' -&gt; 5' nuclease activities.</text>
</comment>
<comment type="catalytic activity">
    <reaction evidence="1">
        <text>Couples ATP hydrolysis with the unwinding of duplex DNA by translocating in the 3'-5' direction.</text>
        <dbReference type="EC" id="5.6.2.4"/>
    </reaction>
</comment>
<comment type="catalytic activity">
    <reaction evidence="1">
        <text>ATP + H2O = ADP + phosphate + H(+)</text>
        <dbReference type="Rhea" id="RHEA:13065"/>
        <dbReference type="ChEBI" id="CHEBI:15377"/>
        <dbReference type="ChEBI" id="CHEBI:15378"/>
        <dbReference type="ChEBI" id="CHEBI:30616"/>
        <dbReference type="ChEBI" id="CHEBI:43474"/>
        <dbReference type="ChEBI" id="CHEBI:456216"/>
        <dbReference type="EC" id="5.6.2.4"/>
    </reaction>
</comment>
<comment type="cofactor">
    <cofactor evidence="1">
        <name>Mg(2+)</name>
        <dbReference type="ChEBI" id="CHEBI:18420"/>
    </cofactor>
</comment>
<comment type="subunit">
    <text evidence="1">Heterodimer of AddA and AddB/RexB.</text>
</comment>
<comment type="similarity">
    <text evidence="1">Belongs to the helicase family. AddA subfamily.</text>
</comment>
<proteinExistence type="inferred from homology"/>
<protein>
    <recommendedName>
        <fullName evidence="1">ATP-dependent helicase/nuclease subunit A</fullName>
        <ecNumber evidence="1">3.1.-.-</ecNumber>
        <ecNumber evidence="1">5.6.2.4</ecNumber>
    </recommendedName>
    <alternativeName>
        <fullName evidence="1">ATP-dependent helicase/nuclease AddA</fullName>
    </alternativeName>
    <alternativeName>
        <fullName evidence="1">DNA 3'-5' helicase AddA</fullName>
    </alternativeName>
</protein>